<accession>B3WE80</accession>
<name>DER_LACCB</name>
<dbReference type="EMBL" id="FM177140">
    <property type="protein sequence ID" value="CAQ66681.1"/>
    <property type="molecule type" value="Genomic_DNA"/>
</dbReference>
<dbReference type="SMR" id="B3WE80"/>
<dbReference type="KEGG" id="lcb:LCABL_16000"/>
<dbReference type="HOGENOM" id="CLU_016077_6_2_9"/>
<dbReference type="GO" id="GO:0005525">
    <property type="term" value="F:GTP binding"/>
    <property type="evidence" value="ECO:0007669"/>
    <property type="project" value="UniProtKB-UniRule"/>
</dbReference>
<dbReference type="GO" id="GO:0043022">
    <property type="term" value="F:ribosome binding"/>
    <property type="evidence" value="ECO:0007669"/>
    <property type="project" value="TreeGrafter"/>
</dbReference>
<dbReference type="GO" id="GO:0042254">
    <property type="term" value="P:ribosome biogenesis"/>
    <property type="evidence" value="ECO:0007669"/>
    <property type="project" value="UniProtKB-KW"/>
</dbReference>
<dbReference type="CDD" id="cd01894">
    <property type="entry name" value="EngA1"/>
    <property type="match status" value="1"/>
</dbReference>
<dbReference type="CDD" id="cd01895">
    <property type="entry name" value="EngA2"/>
    <property type="match status" value="1"/>
</dbReference>
<dbReference type="FunFam" id="3.30.300.20:FF:000004">
    <property type="entry name" value="GTPase Der"/>
    <property type="match status" value="1"/>
</dbReference>
<dbReference type="FunFam" id="3.40.50.300:FF:000040">
    <property type="entry name" value="GTPase Der"/>
    <property type="match status" value="1"/>
</dbReference>
<dbReference type="FunFam" id="3.40.50.300:FF:000057">
    <property type="entry name" value="GTPase Der"/>
    <property type="match status" value="1"/>
</dbReference>
<dbReference type="Gene3D" id="3.30.300.20">
    <property type="match status" value="1"/>
</dbReference>
<dbReference type="Gene3D" id="3.40.50.300">
    <property type="entry name" value="P-loop containing nucleotide triphosphate hydrolases"/>
    <property type="match status" value="2"/>
</dbReference>
<dbReference type="HAMAP" id="MF_00195">
    <property type="entry name" value="GTPase_Der"/>
    <property type="match status" value="1"/>
</dbReference>
<dbReference type="InterPro" id="IPR031166">
    <property type="entry name" value="G_ENGA"/>
</dbReference>
<dbReference type="InterPro" id="IPR006073">
    <property type="entry name" value="GTP-bd"/>
</dbReference>
<dbReference type="InterPro" id="IPR016484">
    <property type="entry name" value="GTPase_Der"/>
</dbReference>
<dbReference type="InterPro" id="IPR032859">
    <property type="entry name" value="KH_dom-like"/>
</dbReference>
<dbReference type="InterPro" id="IPR015946">
    <property type="entry name" value="KH_dom-like_a/b"/>
</dbReference>
<dbReference type="InterPro" id="IPR027417">
    <property type="entry name" value="P-loop_NTPase"/>
</dbReference>
<dbReference type="InterPro" id="IPR005225">
    <property type="entry name" value="Small_GTP-bd"/>
</dbReference>
<dbReference type="NCBIfam" id="TIGR03594">
    <property type="entry name" value="GTPase_EngA"/>
    <property type="match status" value="1"/>
</dbReference>
<dbReference type="NCBIfam" id="TIGR00231">
    <property type="entry name" value="small_GTP"/>
    <property type="match status" value="2"/>
</dbReference>
<dbReference type="PANTHER" id="PTHR43834">
    <property type="entry name" value="GTPASE DER"/>
    <property type="match status" value="1"/>
</dbReference>
<dbReference type="PANTHER" id="PTHR43834:SF6">
    <property type="entry name" value="GTPASE DER"/>
    <property type="match status" value="1"/>
</dbReference>
<dbReference type="Pfam" id="PF14714">
    <property type="entry name" value="KH_dom-like"/>
    <property type="match status" value="1"/>
</dbReference>
<dbReference type="Pfam" id="PF01926">
    <property type="entry name" value="MMR_HSR1"/>
    <property type="match status" value="2"/>
</dbReference>
<dbReference type="PIRSF" id="PIRSF006485">
    <property type="entry name" value="GTP-binding_EngA"/>
    <property type="match status" value="1"/>
</dbReference>
<dbReference type="PRINTS" id="PR00326">
    <property type="entry name" value="GTP1OBG"/>
</dbReference>
<dbReference type="SUPFAM" id="SSF52540">
    <property type="entry name" value="P-loop containing nucleoside triphosphate hydrolases"/>
    <property type="match status" value="2"/>
</dbReference>
<dbReference type="PROSITE" id="PS51712">
    <property type="entry name" value="G_ENGA"/>
    <property type="match status" value="2"/>
</dbReference>
<comment type="function">
    <text evidence="1">GTPase that plays an essential role in the late steps of ribosome biogenesis.</text>
</comment>
<comment type="subunit">
    <text evidence="1">Associates with the 50S ribosomal subunit.</text>
</comment>
<comment type="similarity">
    <text evidence="1">Belongs to the TRAFAC class TrmE-Era-EngA-EngB-Septin-like GTPase superfamily. EngA (Der) GTPase family.</text>
</comment>
<reference key="1">
    <citation type="submission" date="2008-06" db="EMBL/GenBank/DDBJ databases">
        <title>Lactobacillus casei BL23 complete genome sequence.</title>
        <authorList>
            <person name="Maze A."/>
            <person name="Boel G."/>
            <person name="Bourand A."/>
            <person name="Loux V."/>
            <person name="Gibrat J.F."/>
            <person name="Zuniga M."/>
            <person name="Hartke A."/>
            <person name="Deutscher J."/>
        </authorList>
    </citation>
    <scope>NUCLEOTIDE SEQUENCE [LARGE SCALE GENOMIC DNA]</scope>
    <source>
        <strain>BL23</strain>
    </source>
</reference>
<protein>
    <recommendedName>
        <fullName evidence="1">GTPase Der</fullName>
    </recommendedName>
    <alternativeName>
        <fullName evidence="1">GTP-binding protein EngA</fullName>
    </alternativeName>
</protein>
<gene>
    <name evidence="1" type="primary">der</name>
    <name type="synonym">engA</name>
    <name type="ordered locus">LCABL_16000</name>
</gene>
<proteinExistence type="inferred from homology"/>
<keyword id="KW-0342">GTP-binding</keyword>
<keyword id="KW-0547">Nucleotide-binding</keyword>
<keyword id="KW-0677">Repeat</keyword>
<keyword id="KW-0690">Ribosome biogenesis</keyword>
<evidence type="ECO:0000255" key="1">
    <source>
        <dbReference type="HAMAP-Rule" id="MF_00195"/>
    </source>
</evidence>
<sequence length="435" mass="48585">MVLPTLAIVGRPNVGKSTIFNRILGERVSIVEDTPGVTRDRIYGTSEWLGKEFAVIDTGGIDLGDEPFLAQIKDQAEIAIDEADVILFLADIESGVTDADERVAQILYRAKKPVVLAVNKVDNPERRQDIYDFYSLGFGEPYPLSGTHGIGLGDVLDAVLAAFPSEDKSVEDDSIKFSLIGRPNVGKSSLVNAILGENRVIVSPIEGTTRDAIDTKFEAVDETFTMIDTAGIRKRGKVYENTEKYAVMRALRAIDRSDVVLFVINAEEGIREQDKKVAGYAHEAGRGIIIVVNKWDTVEKDNHTMKDFENLIRQEFQYLDYAPIIFVSAKTKQRLQSLPAMIVAVSENQTRRIQSSVLNDVLMDAITVTPTPTVNGKRLRIYYMTQVAVKPPTFVVFVNDPDLLHFSYERFLINQLRQAFDFSGTPIHIIARKRK</sequence>
<feature type="chain" id="PRO_1000099132" description="GTPase Der">
    <location>
        <begin position="1"/>
        <end position="435"/>
    </location>
</feature>
<feature type="domain" description="EngA-type G 1">
    <location>
        <begin position="4"/>
        <end position="167"/>
    </location>
</feature>
<feature type="domain" description="EngA-type G 2">
    <location>
        <begin position="175"/>
        <end position="350"/>
    </location>
</feature>
<feature type="domain" description="KH-like" evidence="1">
    <location>
        <begin position="351"/>
        <end position="435"/>
    </location>
</feature>
<feature type="binding site" evidence="1">
    <location>
        <begin position="10"/>
        <end position="17"/>
    </location>
    <ligand>
        <name>GTP</name>
        <dbReference type="ChEBI" id="CHEBI:37565"/>
        <label>1</label>
    </ligand>
</feature>
<feature type="binding site" evidence="1">
    <location>
        <begin position="57"/>
        <end position="61"/>
    </location>
    <ligand>
        <name>GTP</name>
        <dbReference type="ChEBI" id="CHEBI:37565"/>
        <label>1</label>
    </ligand>
</feature>
<feature type="binding site" evidence="1">
    <location>
        <begin position="119"/>
        <end position="122"/>
    </location>
    <ligand>
        <name>GTP</name>
        <dbReference type="ChEBI" id="CHEBI:37565"/>
        <label>1</label>
    </ligand>
</feature>
<feature type="binding site" evidence="1">
    <location>
        <begin position="181"/>
        <end position="188"/>
    </location>
    <ligand>
        <name>GTP</name>
        <dbReference type="ChEBI" id="CHEBI:37565"/>
        <label>2</label>
    </ligand>
</feature>
<feature type="binding site" evidence="1">
    <location>
        <begin position="228"/>
        <end position="232"/>
    </location>
    <ligand>
        <name>GTP</name>
        <dbReference type="ChEBI" id="CHEBI:37565"/>
        <label>2</label>
    </ligand>
</feature>
<feature type="binding site" evidence="1">
    <location>
        <begin position="293"/>
        <end position="296"/>
    </location>
    <ligand>
        <name>GTP</name>
        <dbReference type="ChEBI" id="CHEBI:37565"/>
        <label>2</label>
    </ligand>
</feature>
<organism>
    <name type="scientific">Lacticaseibacillus casei (strain BL23)</name>
    <name type="common">Lactobacillus casei</name>
    <dbReference type="NCBI Taxonomy" id="543734"/>
    <lineage>
        <taxon>Bacteria</taxon>
        <taxon>Bacillati</taxon>
        <taxon>Bacillota</taxon>
        <taxon>Bacilli</taxon>
        <taxon>Lactobacillales</taxon>
        <taxon>Lactobacillaceae</taxon>
        <taxon>Lacticaseibacillus</taxon>
    </lineage>
</organism>